<comment type="function">
    <text evidence="11">Cooperates with p53/TP53 in the negative regulatory pathway of cell growth by modulating p53-dependent transcriptional activation. Implicated as a tumor suppressor gene.</text>
</comment>
<comment type="subunit">
    <text evidence="7 8 9 11">Interacts with H3K4me3 and to a lesser extent with H3K4me2. Interacts with TP53. Isoform 2 interacts with RSL1D1.</text>
</comment>
<comment type="interaction">
    <interactant intactId="EBI-399198">
        <id>Q9UK53</id>
    </interactant>
    <interactant intactId="EBI-3989435">
        <id>P15559</id>
        <label>NQO1</label>
    </interactant>
    <organismsDiffer>false</organismsDiffer>
    <experiments>2</experiments>
</comment>
<comment type="interaction">
    <interactant intactId="EBI-8068204">
        <id>Q9UK53-2</id>
    </interactant>
    <interactant intactId="EBI-17869840">
        <id>Q96A65-2</id>
        <label>EXOC4</label>
    </interactant>
    <organismsDiffer>false</organismsDiffer>
    <experiments>3</experiments>
</comment>
<comment type="subcellular location">
    <subcellularLocation>
        <location evidence="18">Nucleus</location>
    </subcellularLocation>
</comment>
<comment type="alternative products">
    <event type="alternative splicing"/>
    <isoform>
        <id>Q9UK53-1</id>
        <name>1</name>
        <name>p47ING1a</name>
        <name>ING1-ALT2</name>
        <sequence type="displayed"/>
    </isoform>
    <isoform>
        <id>Q9UK53-2</id>
        <name>2</name>
        <name>p33ING1b</name>
        <name>Variant A</name>
        <sequence type="described" ref="VSP_009126"/>
    </isoform>
    <isoform>
        <id>Q9UK53-3</id>
        <name>3</name>
        <name>p24ING1c</name>
        <name>ING1-ALT1</name>
        <name>Variant B</name>
        <sequence type="described" ref="VSP_009129"/>
    </isoform>
    <isoform>
        <id>Q9UK53-4</id>
        <name>4</name>
        <name>Variant C</name>
        <sequence type="described" ref="VSP_009127"/>
    </isoform>
    <isoform>
        <id>Q9UK53-5</id>
        <name>5</name>
        <sequence type="described" ref="VSP_009128"/>
    </isoform>
</comment>
<comment type="tissue specificity">
    <text evidence="4">Isoform 2 was expressed in all normal tissues and cells examined, as well as in all breast cancer and melanoma cell lines examined. Isoform 3 was expressed in testis, liver, and kidney, weakly expressed in colon and brain and not expressed in breast and cultured melanocytes. Isoform 4 was highly expressed in testis and weakly expressed in brain, but not expressed in breast, colon, kidney, melanocytes, breast cancer or melanoma cell lines.</text>
</comment>
<comment type="domain">
    <text evidence="7">The PHD-type zinc finger mediates the binding to H3K4me3.</text>
</comment>
<comment type="domain">
    <text evidence="1">The polybasic region (PBR) is responsive to the binding to phosphoinositides (PtdInsPs), including phosphatidylinositol 5-phosphate (PtdIns(5)P).</text>
</comment>
<comment type="disease" evidence="6">
    <disease id="DI-01696">
        <name>Squamous cell carcinoma of the head and neck</name>
        <acronym>HNSCC</acronym>
        <description>A non-melanoma skin cancer affecting the head and neck. The hallmark of cutaneous SCC is malignant transformation of normal epidermal keratinocytes.</description>
        <dbReference type="MIM" id="275355"/>
    </disease>
    <text>The disease is caused by variants affecting the gene represented in this entry.</text>
</comment>
<comment type="similarity">
    <text evidence="18">Belongs to the ING family.</text>
</comment>
<comment type="sequence caution" evidence="18">
    <conflict type="frameshift">
        <sequence resource="EMBL-CDS" id="AAB60879"/>
    </conflict>
</comment>
<comment type="sequence caution" evidence="18">
    <conflict type="erroneous gene model prediction">
        <sequence resource="EMBL-CDS" id="AAG02579"/>
    </conflict>
</comment>
<dbReference type="EMBL" id="AF181849">
    <property type="protein sequence ID" value="AAF07920.1"/>
    <property type="molecule type" value="mRNA"/>
</dbReference>
<dbReference type="EMBL" id="AF181850">
    <property type="protein sequence ID" value="AAF07921.1"/>
    <property type="molecule type" value="mRNA"/>
</dbReference>
<dbReference type="EMBL" id="AF001954">
    <property type="protein sequence ID" value="AAB60879.1"/>
    <property type="status" value="ALT_FRAME"/>
    <property type="molecule type" value="mRNA"/>
</dbReference>
<dbReference type="EMBL" id="AF044076">
    <property type="protein sequence ID" value="AAC00501.1"/>
    <property type="molecule type" value="mRNA"/>
</dbReference>
<dbReference type="EMBL" id="AF149721">
    <property type="protein sequence ID" value="AAF37421.1"/>
    <property type="molecule type" value="mRNA"/>
</dbReference>
<dbReference type="EMBL" id="AF149722">
    <property type="protein sequence ID" value="AAF37422.1"/>
    <property type="molecule type" value="mRNA"/>
</dbReference>
<dbReference type="EMBL" id="AF149723">
    <property type="protein sequence ID" value="AAF37423.1"/>
    <property type="molecule type" value="mRNA"/>
</dbReference>
<dbReference type="EMBL" id="AF167551">
    <property type="protein sequence ID" value="AAG02578.1"/>
    <property type="molecule type" value="Genomic_DNA"/>
</dbReference>
<dbReference type="EMBL" id="AF167550">
    <property type="protein sequence ID" value="AAG02578.1"/>
    <property type="status" value="JOINED"/>
    <property type="molecule type" value="Genomic_DNA"/>
</dbReference>
<dbReference type="EMBL" id="AF167551">
    <property type="protein sequence ID" value="AAG02579.1"/>
    <property type="status" value="ALT_SEQ"/>
    <property type="molecule type" value="Genomic_DNA"/>
</dbReference>
<dbReference type="EMBL" id="AF167549">
    <property type="protein sequence ID" value="AAG02579.1"/>
    <property type="status" value="JOINED"/>
    <property type="molecule type" value="Genomic_DNA"/>
</dbReference>
<dbReference type="EMBL" id="AB037387">
    <property type="protein sequence ID" value="BAB08101.1"/>
    <property type="molecule type" value="Genomic_DNA"/>
</dbReference>
<dbReference type="EMBL" id="AB037387">
    <property type="protein sequence ID" value="BAB08102.1"/>
    <property type="molecule type" value="Genomic_DNA"/>
</dbReference>
<dbReference type="EMBL" id="AB037387">
    <property type="protein sequence ID" value="BAB08103.1"/>
    <property type="molecule type" value="Genomic_DNA"/>
</dbReference>
<dbReference type="EMBL" id="AB037594">
    <property type="protein sequence ID" value="BAB20992.2"/>
    <property type="molecule type" value="mRNA"/>
</dbReference>
<dbReference type="EMBL" id="AB031269">
    <property type="protein sequence ID" value="BAA83496.1"/>
    <property type="molecule type" value="mRNA"/>
</dbReference>
<dbReference type="EMBL" id="AB024401">
    <property type="protein sequence ID" value="BAA82886.1"/>
    <property type="molecule type" value="mRNA"/>
</dbReference>
<dbReference type="EMBL" id="AB024402">
    <property type="protein sequence ID" value="BAA82887.1"/>
    <property type="molecule type" value="mRNA"/>
</dbReference>
<dbReference type="EMBL" id="AB024403">
    <property type="protein sequence ID" value="BAA82888.1"/>
    <property type="molecule type" value="Genomic_DNA"/>
</dbReference>
<dbReference type="EMBL" id="AB024404">
    <property type="protein sequence ID" value="BAA82889.1"/>
    <property type="molecule type" value="Genomic_DNA"/>
</dbReference>
<dbReference type="EMBL" id="AB024404">
    <property type="protein sequence ID" value="BAA83462.1"/>
    <property type="molecule type" value="Genomic_DNA"/>
</dbReference>
<dbReference type="EMBL" id="AB024405">
    <property type="protein sequence ID" value="BAA82890.1"/>
    <property type="molecule type" value="Genomic_DNA"/>
</dbReference>
<dbReference type="EMBL" id="AJ310392">
    <property type="protein sequence ID" value="CAC38067.1"/>
    <property type="molecule type" value="mRNA"/>
</dbReference>
<dbReference type="EMBL" id="AF078835">
    <property type="protein sequence ID" value="AAG12174.1"/>
    <property type="molecule type" value="mRNA"/>
</dbReference>
<dbReference type="EMBL" id="AF078837">
    <property type="protein sequence ID" value="AAG12175.1"/>
    <property type="molecule type" value="Genomic_DNA"/>
</dbReference>
<dbReference type="EMBL" id="AF078836">
    <property type="protein sequence ID" value="AAG12175.1"/>
    <property type="status" value="JOINED"/>
    <property type="molecule type" value="Genomic_DNA"/>
</dbReference>
<dbReference type="EMBL" id="AK302353">
    <property type="protein sequence ID" value="BAG63679.1"/>
    <property type="molecule type" value="mRNA"/>
</dbReference>
<dbReference type="EMBL" id="AL157820">
    <property type="status" value="NOT_ANNOTATED_CDS"/>
    <property type="molecule type" value="Genomic_DNA"/>
</dbReference>
<dbReference type="EMBL" id="CH471085">
    <property type="protein sequence ID" value="EAX09127.1"/>
    <property type="molecule type" value="Genomic_DNA"/>
</dbReference>
<dbReference type="EMBL" id="CH471085">
    <property type="protein sequence ID" value="EAX09130.1"/>
    <property type="molecule type" value="Genomic_DNA"/>
</dbReference>
<dbReference type="EMBL" id="BC093942">
    <property type="protein sequence ID" value="AAH93942.1"/>
    <property type="molecule type" value="mRNA"/>
</dbReference>
<dbReference type="EMBL" id="BC093944">
    <property type="protein sequence ID" value="AAH93944.1"/>
    <property type="molecule type" value="mRNA"/>
</dbReference>
<dbReference type="CCDS" id="CCDS9515.1">
    <molecule id="Q9UK53-4"/>
</dbReference>
<dbReference type="CCDS" id="CCDS9516.1">
    <molecule id="Q9UK53-2"/>
</dbReference>
<dbReference type="CCDS" id="CCDS9517.1">
    <molecule id="Q9UK53-1"/>
</dbReference>
<dbReference type="CCDS" id="CCDS9518.1">
    <molecule id="Q9UK53-3"/>
</dbReference>
<dbReference type="RefSeq" id="NP_001254657.1">
    <molecule id="Q9UK53-5"/>
    <property type="nucleotide sequence ID" value="NM_001267728.1"/>
</dbReference>
<dbReference type="RefSeq" id="NP_005528.4">
    <property type="nucleotide sequence ID" value="NM_005537.5"/>
</dbReference>
<dbReference type="RefSeq" id="NP_937860.1">
    <molecule id="Q9UK53-4"/>
    <property type="nucleotide sequence ID" value="NM_198217.3"/>
</dbReference>
<dbReference type="RefSeq" id="NP_937861.1">
    <molecule id="Q9UK53-3"/>
    <property type="nucleotide sequence ID" value="NM_198218.3"/>
</dbReference>
<dbReference type="RefSeq" id="NP_937862.1">
    <molecule id="Q9UK53-2"/>
    <property type="nucleotide sequence ID" value="NM_198219.3"/>
</dbReference>
<dbReference type="PDB" id="2QIC">
    <property type="method" value="X-ray"/>
    <property type="resolution" value="2.10 A"/>
    <property type="chains" value="A=345-404"/>
</dbReference>
<dbReference type="PDBsum" id="2QIC"/>
<dbReference type="SMR" id="Q9UK53"/>
<dbReference type="BioGRID" id="109833">
    <property type="interactions" value="109"/>
</dbReference>
<dbReference type="ComplexPortal" id="CPX-3321">
    <property type="entry name" value="SIN3A histone deacetylase complex"/>
</dbReference>
<dbReference type="ComplexPortal" id="CPX-3322">
    <property type="entry name" value="SIN3B histone deacetylase complex"/>
</dbReference>
<dbReference type="ComplexPortal" id="CPX-3323">
    <property type="entry name" value="SIN3A histone deacetylase complex, ES cell-specific variant"/>
</dbReference>
<dbReference type="CORUM" id="Q9UK53"/>
<dbReference type="DIP" id="DIP-24256N"/>
<dbReference type="DIP" id="DIP-24257N"/>
<dbReference type="DIP" id="DIP-24258N"/>
<dbReference type="FunCoup" id="Q9UK53">
    <property type="interactions" value="2750"/>
</dbReference>
<dbReference type="IntAct" id="Q9UK53">
    <property type="interactions" value="68"/>
</dbReference>
<dbReference type="MINT" id="Q9UK53"/>
<dbReference type="STRING" id="9606.ENSP00000364929"/>
<dbReference type="GlyGen" id="Q9UK53">
    <property type="glycosylation" value="1 site, 1 O-linked glycan (1 site)"/>
</dbReference>
<dbReference type="iPTMnet" id="Q9UK53"/>
<dbReference type="PhosphoSitePlus" id="Q9UK53"/>
<dbReference type="BioMuta" id="ING1"/>
<dbReference type="DMDM" id="212276438"/>
<dbReference type="jPOST" id="Q9UK53"/>
<dbReference type="MassIVE" id="Q9UK53"/>
<dbReference type="PaxDb" id="9606-ENSP00000364929"/>
<dbReference type="PeptideAtlas" id="Q9UK53"/>
<dbReference type="ProteomicsDB" id="84718">
    <molecule id="Q9UK53-1"/>
</dbReference>
<dbReference type="ProteomicsDB" id="84719">
    <molecule id="Q9UK53-2"/>
</dbReference>
<dbReference type="ProteomicsDB" id="84720">
    <molecule id="Q9UK53-3"/>
</dbReference>
<dbReference type="ProteomicsDB" id="84721">
    <molecule id="Q9UK53-4"/>
</dbReference>
<dbReference type="ProteomicsDB" id="84722">
    <molecule id="Q9UK53-5"/>
</dbReference>
<dbReference type="Pumba" id="Q9UK53"/>
<dbReference type="Antibodypedia" id="4248">
    <property type="antibodies" value="499 antibodies from 38 providers"/>
</dbReference>
<dbReference type="DNASU" id="3621"/>
<dbReference type="Ensembl" id="ENST00000333219.9">
    <molecule id="Q9UK53-2"/>
    <property type="protein sequence ID" value="ENSP00000328436.8"/>
    <property type="gene ID" value="ENSG00000153487.14"/>
</dbReference>
<dbReference type="Ensembl" id="ENST00000338450.7">
    <molecule id="Q9UK53-4"/>
    <property type="protein sequence ID" value="ENSP00000345202.7"/>
    <property type="gene ID" value="ENSG00000153487.14"/>
</dbReference>
<dbReference type="Ensembl" id="ENST00000375775.4">
    <molecule id="Q9UK53-3"/>
    <property type="protein sequence ID" value="ENSP00000364930.3"/>
    <property type="gene ID" value="ENSG00000153487.14"/>
</dbReference>
<dbReference type="Ensembl" id="ENST00000715208.1">
    <molecule id="Q9UK53-2"/>
    <property type="protein sequence ID" value="ENSP00000520415.1"/>
    <property type="gene ID" value="ENSG00000153487.14"/>
</dbReference>
<dbReference type="GeneID" id="3621"/>
<dbReference type="KEGG" id="hsa:3621"/>
<dbReference type="MANE-Select" id="ENST00000333219.9">
    <molecule id="Q9UK53-2"/>
    <property type="protein sequence ID" value="ENSP00000328436.8"/>
    <property type="RefSeq nucleotide sequence ID" value="NM_198219.3"/>
    <property type="RefSeq protein sequence ID" value="NP_937862.1"/>
</dbReference>
<dbReference type="UCSC" id="uc001vrf.5">
    <molecule id="Q9UK53-1"/>
    <property type="organism name" value="human"/>
</dbReference>
<dbReference type="AGR" id="HGNC:6062"/>
<dbReference type="CTD" id="3621"/>
<dbReference type="DisGeNET" id="3621"/>
<dbReference type="GeneCards" id="ING1"/>
<dbReference type="HGNC" id="HGNC:6062">
    <property type="gene designation" value="ING1"/>
</dbReference>
<dbReference type="HPA" id="ENSG00000153487">
    <property type="expression patterns" value="Low tissue specificity"/>
</dbReference>
<dbReference type="MalaCards" id="ING1"/>
<dbReference type="MIM" id="275355">
    <property type="type" value="phenotype"/>
</dbReference>
<dbReference type="MIM" id="601566">
    <property type="type" value="gene"/>
</dbReference>
<dbReference type="neXtProt" id="NX_Q9UK53"/>
<dbReference type="OpenTargets" id="ENSG00000153487"/>
<dbReference type="Orphanet" id="494547">
    <property type="disease" value="Squamous cell carcinoma of the hypopharynx"/>
</dbReference>
<dbReference type="Orphanet" id="494550">
    <property type="disease" value="Squamous cell carcinoma of the larynx"/>
</dbReference>
<dbReference type="Orphanet" id="502366">
    <property type="disease" value="Squamous cell carcinoma of the lip"/>
</dbReference>
<dbReference type="Orphanet" id="500464">
    <property type="disease" value="Squamous cell carcinoma of the nasal cavity and paranasal sinuses"/>
</dbReference>
<dbReference type="Orphanet" id="502363">
    <property type="disease" value="Squamous cell carcinoma of the oral cavity"/>
</dbReference>
<dbReference type="Orphanet" id="500478">
    <property type="disease" value="Squamous cell carcinoma of the oropharynx"/>
</dbReference>
<dbReference type="PharmGKB" id="PA29872"/>
<dbReference type="VEuPathDB" id="HostDB:ENSG00000153487"/>
<dbReference type="eggNOG" id="KOG1973">
    <property type="taxonomic scope" value="Eukaryota"/>
</dbReference>
<dbReference type="GeneTree" id="ENSGT00940000155401"/>
<dbReference type="HOGENOM" id="CLU_031900_5_1_1"/>
<dbReference type="InParanoid" id="Q9UK53"/>
<dbReference type="OMA" id="MREQGNQ"/>
<dbReference type="OrthoDB" id="5411773at2759"/>
<dbReference type="PAN-GO" id="Q9UK53">
    <property type="GO annotations" value="3 GO annotations based on evolutionary models"/>
</dbReference>
<dbReference type="PhylomeDB" id="Q9UK53"/>
<dbReference type="TreeFam" id="TF352014"/>
<dbReference type="PathwayCommons" id="Q9UK53"/>
<dbReference type="SignaLink" id="Q9UK53"/>
<dbReference type="SIGNOR" id="Q9UK53"/>
<dbReference type="BioGRID-ORCS" id="3621">
    <property type="hits" value="19 hits in 1176 CRISPR screens"/>
</dbReference>
<dbReference type="ChiTaRS" id="ING1">
    <property type="organism name" value="human"/>
</dbReference>
<dbReference type="EvolutionaryTrace" id="Q9UK53"/>
<dbReference type="GeneWiki" id="ING1"/>
<dbReference type="GenomeRNAi" id="3621"/>
<dbReference type="Pharos" id="Q9UK53">
    <property type="development level" value="Tbio"/>
</dbReference>
<dbReference type="PRO" id="PR:Q9UK53"/>
<dbReference type="Proteomes" id="UP000005640">
    <property type="component" value="Chromosome 13"/>
</dbReference>
<dbReference type="RNAct" id="Q9UK53">
    <property type="molecule type" value="protein"/>
</dbReference>
<dbReference type="Bgee" id="ENSG00000153487">
    <property type="expression patterns" value="Expressed in stromal cell of endometrium and 172 other cell types or tissues"/>
</dbReference>
<dbReference type="ExpressionAtlas" id="Q9UK53">
    <property type="expression patterns" value="baseline and differential"/>
</dbReference>
<dbReference type="GO" id="GO:0005634">
    <property type="term" value="C:nucleus"/>
    <property type="evidence" value="ECO:0000318"/>
    <property type="project" value="GO_Central"/>
</dbReference>
<dbReference type="GO" id="GO:0070822">
    <property type="term" value="C:Sin3-type complex"/>
    <property type="evidence" value="ECO:0000303"/>
    <property type="project" value="ComplexPortal"/>
</dbReference>
<dbReference type="GO" id="GO:0140002">
    <property type="term" value="F:histone H3K4me3 reader activity"/>
    <property type="evidence" value="ECO:0000314"/>
    <property type="project" value="UniProtKB"/>
</dbReference>
<dbReference type="GO" id="GO:0035064">
    <property type="term" value="F:methylated histone binding"/>
    <property type="evidence" value="ECO:0000318"/>
    <property type="project" value="GO_Central"/>
</dbReference>
<dbReference type="GO" id="GO:0008270">
    <property type="term" value="F:zinc ion binding"/>
    <property type="evidence" value="ECO:0007669"/>
    <property type="project" value="UniProtKB-KW"/>
</dbReference>
<dbReference type="GO" id="GO:0030308">
    <property type="term" value="P:negative regulation of cell growth"/>
    <property type="evidence" value="ECO:0000303"/>
    <property type="project" value="UniProtKB"/>
</dbReference>
<dbReference type="GO" id="GO:0030336">
    <property type="term" value="P:negative regulation of cell migration"/>
    <property type="evidence" value="ECO:0000303"/>
    <property type="project" value="ComplexPortal"/>
</dbReference>
<dbReference type="GO" id="GO:0008285">
    <property type="term" value="P:negative regulation of cell population proliferation"/>
    <property type="evidence" value="ECO:0000304"/>
    <property type="project" value="ProtInc"/>
</dbReference>
<dbReference type="GO" id="GO:1902455">
    <property type="term" value="P:negative regulation of stem cell population maintenance"/>
    <property type="evidence" value="ECO:0000303"/>
    <property type="project" value="ComplexPortal"/>
</dbReference>
<dbReference type="GO" id="GO:0000122">
    <property type="term" value="P:negative regulation of transcription by RNA polymerase II"/>
    <property type="evidence" value="ECO:0000303"/>
    <property type="project" value="ComplexPortal"/>
</dbReference>
<dbReference type="GO" id="GO:0030512">
    <property type="term" value="P:negative regulation of transforming growth factor beta receptor signaling pathway"/>
    <property type="evidence" value="ECO:0000303"/>
    <property type="project" value="ComplexPortal"/>
</dbReference>
<dbReference type="GO" id="GO:0045893">
    <property type="term" value="P:positive regulation of DNA-templated transcription"/>
    <property type="evidence" value="ECO:0000318"/>
    <property type="project" value="GO_Central"/>
</dbReference>
<dbReference type="GO" id="GO:1902459">
    <property type="term" value="P:positive regulation of stem cell population maintenance"/>
    <property type="evidence" value="ECO:0000303"/>
    <property type="project" value="ComplexPortal"/>
</dbReference>
<dbReference type="GO" id="GO:0006606">
    <property type="term" value="P:protein import into nucleus"/>
    <property type="evidence" value="ECO:0007669"/>
    <property type="project" value="Ensembl"/>
</dbReference>
<dbReference type="GO" id="GO:0043067">
    <property type="term" value="P:regulation of programmed cell death"/>
    <property type="evidence" value="ECO:0007669"/>
    <property type="project" value="Ensembl"/>
</dbReference>
<dbReference type="CDD" id="cd16860">
    <property type="entry name" value="ING_ING1"/>
    <property type="match status" value="1"/>
</dbReference>
<dbReference type="CDD" id="cd15584">
    <property type="entry name" value="PHD_ING1_2"/>
    <property type="match status" value="1"/>
</dbReference>
<dbReference type="FunFam" id="3.30.40.10:FF:000021">
    <property type="entry name" value="Inhibitor of growth 2b"/>
    <property type="match status" value="1"/>
</dbReference>
<dbReference type="Gene3D" id="6.10.140.1740">
    <property type="match status" value="1"/>
</dbReference>
<dbReference type="Gene3D" id="3.30.40.10">
    <property type="entry name" value="Zinc/RING finger domain, C3HC4 (zinc finger)"/>
    <property type="match status" value="1"/>
</dbReference>
<dbReference type="InterPro" id="IPR028643">
    <property type="entry name" value="ING1_PHD_Znf"/>
</dbReference>
<dbReference type="InterPro" id="IPR028651">
    <property type="entry name" value="ING_fam"/>
</dbReference>
<dbReference type="InterPro" id="IPR024610">
    <property type="entry name" value="ING_N_histone-binding"/>
</dbReference>
<dbReference type="InterPro" id="IPR019786">
    <property type="entry name" value="Zinc_finger_PHD-type_CS"/>
</dbReference>
<dbReference type="InterPro" id="IPR011011">
    <property type="entry name" value="Znf_FYVE_PHD"/>
</dbReference>
<dbReference type="InterPro" id="IPR001965">
    <property type="entry name" value="Znf_PHD"/>
</dbReference>
<dbReference type="InterPro" id="IPR019787">
    <property type="entry name" value="Znf_PHD-finger"/>
</dbReference>
<dbReference type="InterPro" id="IPR013083">
    <property type="entry name" value="Znf_RING/FYVE/PHD"/>
</dbReference>
<dbReference type="PANTHER" id="PTHR10333">
    <property type="entry name" value="INHIBITOR OF GROWTH PROTEIN"/>
    <property type="match status" value="1"/>
</dbReference>
<dbReference type="PANTHER" id="PTHR10333:SF85">
    <property type="entry name" value="INHIBITOR OF GROWTH PROTEIN 1"/>
    <property type="match status" value="1"/>
</dbReference>
<dbReference type="Pfam" id="PF12998">
    <property type="entry name" value="ING"/>
    <property type="match status" value="1"/>
</dbReference>
<dbReference type="SMART" id="SM01408">
    <property type="entry name" value="ING"/>
    <property type="match status" value="1"/>
</dbReference>
<dbReference type="SMART" id="SM00249">
    <property type="entry name" value="PHD"/>
    <property type="match status" value="1"/>
</dbReference>
<dbReference type="SUPFAM" id="SSF57903">
    <property type="entry name" value="FYVE/PHD zinc finger"/>
    <property type="match status" value="1"/>
</dbReference>
<dbReference type="PROSITE" id="PS01359">
    <property type="entry name" value="ZF_PHD_1"/>
    <property type="match status" value="1"/>
</dbReference>
<dbReference type="PROSITE" id="PS50016">
    <property type="entry name" value="ZF_PHD_2"/>
    <property type="match status" value="1"/>
</dbReference>
<evidence type="ECO:0000250" key="1">
    <source>
        <dbReference type="UniProtKB" id="Q9H160"/>
    </source>
</evidence>
<evidence type="ECO:0000255" key="2">
    <source>
        <dbReference type="PROSITE-ProRule" id="PRU00146"/>
    </source>
</evidence>
<evidence type="ECO:0000256" key="3">
    <source>
        <dbReference type="SAM" id="MobiDB-lite"/>
    </source>
</evidence>
<evidence type="ECO:0000269" key="4">
    <source>
    </source>
</evidence>
<evidence type="ECO:0000269" key="5">
    <source>
    </source>
</evidence>
<evidence type="ECO:0000269" key="6">
    <source>
    </source>
</evidence>
<evidence type="ECO:0000269" key="7">
    <source>
    </source>
</evidence>
<evidence type="ECO:0000269" key="8">
    <source>
    </source>
</evidence>
<evidence type="ECO:0000269" key="9">
    <source>
    </source>
</evidence>
<evidence type="ECO:0000269" key="10">
    <source>
    </source>
</evidence>
<evidence type="ECO:0000269" key="11">
    <source>
    </source>
</evidence>
<evidence type="ECO:0000303" key="12">
    <source>
    </source>
</evidence>
<evidence type="ECO:0000303" key="13">
    <source>
    </source>
</evidence>
<evidence type="ECO:0000303" key="14">
    <source>
    </source>
</evidence>
<evidence type="ECO:0000303" key="15">
    <source>
    </source>
</evidence>
<evidence type="ECO:0000303" key="16">
    <source>
    </source>
</evidence>
<evidence type="ECO:0000303" key="17">
    <source>
    </source>
</evidence>
<evidence type="ECO:0000305" key="18"/>
<evidence type="ECO:0007744" key="19">
    <source>
        <dbReference type="PDB" id="2QIC"/>
    </source>
</evidence>
<evidence type="ECO:0007744" key="20">
    <source>
    </source>
</evidence>
<evidence type="ECO:0007829" key="21">
    <source>
        <dbReference type="PDB" id="2QIC"/>
    </source>
</evidence>
<organism>
    <name type="scientific">Homo sapiens</name>
    <name type="common">Human</name>
    <dbReference type="NCBI Taxonomy" id="9606"/>
    <lineage>
        <taxon>Eukaryota</taxon>
        <taxon>Metazoa</taxon>
        <taxon>Chordata</taxon>
        <taxon>Craniata</taxon>
        <taxon>Vertebrata</taxon>
        <taxon>Euteleostomi</taxon>
        <taxon>Mammalia</taxon>
        <taxon>Eutheria</taxon>
        <taxon>Euarchontoglires</taxon>
        <taxon>Primates</taxon>
        <taxon>Haplorrhini</taxon>
        <taxon>Catarrhini</taxon>
        <taxon>Hominidae</taxon>
        <taxon>Homo</taxon>
    </lineage>
</organism>
<proteinExistence type="evidence at protein level"/>
<reference key="1">
    <citation type="journal article" date="1996" name="Nat. Genet.">
        <title>Suppression of the novel growth inhibitor p33ING1 promotes neoplastic transformation.</title>
        <authorList>
            <person name="Garkavtsev I.A."/>
            <person name="Kazarov A.R."/>
            <person name="Gudkov A.V."/>
            <person name="Riabowol K."/>
        </authorList>
    </citation>
    <scope>NUCLEOTIDE SEQUENCE [MRNA] (ISOFORMS 1 AND 2)</scope>
    <scope>VARIANT ARG-125</scope>
</reference>
<reference key="2">
    <citation type="journal article" date="1999" name="Nat. Genet.">
        <authorList>
            <person name="Garkavtsev I.A."/>
            <person name="Kazarov A.R."/>
            <person name="Gudkov A.V."/>
            <person name="Riabowol K."/>
        </authorList>
    </citation>
    <scope>ERRATUM OF PUBMED:8944021</scope>
</reference>
<reference key="3">
    <citation type="journal article" date="1999" name="Cancer Res.">
        <title>Cancer-testis antigens and ING1 tumor suppressor gene product are breast cancer antigens: characterization of tissue-specific ING1 transcripts and a homologue gene.</title>
        <authorList>
            <person name="Jaeger D."/>
            <person name="Stockert E."/>
            <person name="Scanlan M.J."/>
            <person name="Guere A.O."/>
            <person name="Jaeger E."/>
            <person name="Knuth A."/>
            <person name="Old L.J."/>
            <person name="Chen Y.-T."/>
        </authorList>
    </citation>
    <scope>NUCLEOTIDE SEQUENCE [MRNA] (ISOFORMS 2; 3 AND 4)</scope>
    <scope>TISSUE SPECIFICITY</scope>
    <source>
        <tissue>Mammary cancer</tissue>
        <tissue>Testis</tissue>
    </source>
</reference>
<reference key="4">
    <citation type="journal article" date="2000" name="Mol. Biol. (Mosk.)">
        <title>Genomic organization of the suppressor gene for tumor growth ING1.</title>
        <authorList>
            <person name="Baranova A.V."/>
            <person name="Ivanov D.V."/>
            <person name="Makeeva N.V."/>
            <person name="Corcoran M."/>
            <person name="Nikitin E.A."/>
            <person name="Borodina T.A."/>
            <person name="Poltaraus A.B."/>
            <person name="Glinshchikova O.A."/>
            <person name="Sudarikov A.B."/>
            <person name="Oscier D."/>
            <person name="Iankovskii N.K."/>
        </authorList>
    </citation>
    <scope>NUCLEOTIDE SEQUENCE (ISOFORMS 1 AND 2)</scope>
</reference>
<reference key="5">
    <citation type="journal article" date="2000" name="Cancer Res.">
        <title>Genomic structure of the human ING1 gene and tumor-specific mutations detected in head and neck squamous cell carcinomas.</title>
        <authorList>
            <person name="Gunduz M."/>
            <person name="Ouchida M."/>
            <person name="Fukushima K."/>
            <person name="Hanafusa H."/>
            <person name="Etani T."/>
            <person name="Nishioka S."/>
            <person name="Nishizaki K."/>
            <person name="Shimizu K."/>
        </authorList>
    </citation>
    <scope>NUCLEOTIDE SEQUENCE [GENOMIC DNA] (ISOFORMS 1; 2; 3 AND 5)</scope>
    <scope>VARIANTS HNSCC ARG-125; ASP-335; SER-358 AND SER-359</scope>
</reference>
<reference key="6">
    <citation type="journal article" date="2000" name="J. Hum. Genet.">
        <title>p24/ING1-ALT1 and p47/ING1-ALT2, distinct alternative transcripts of p33/ING1.</title>
        <authorList>
            <person name="Saito A."/>
            <person name="Furukawa T."/>
            <person name="Fukushige S."/>
            <person name="Koyama S."/>
            <person name="Hoshi M."/>
            <person name="Hayashi Y."/>
            <person name="Horii A."/>
        </authorList>
    </citation>
    <scope>NUCLEOTIDE SEQUENCE [GENOMIC DNA / MRNA] (ISOFORMS 1; 2 AND 3)</scope>
    <scope>VARIANT ARG-125</scope>
</reference>
<reference key="7">
    <citation type="journal article" date="2000" name="J. Pathol.">
        <title>Supplement: sequencing of ING1 tumour suppressor gene cDNAs generated from mRNA recovered from normal and neoplastic cell lines.</title>
        <authorList>
            <person name="Nouman G.S."/>
            <person name="Anderson J.J."/>
            <person name="Angus B."/>
            <person name="Lunec J."/>
        </authorList>
    </citation>
    <scope>NUCLEOTIDE SEQUENCE (ISOFORM 2)</scope>
    <source>
        <tissue>Brain</tissue>
    </source>
</reference>
<reference key="8">
    <citation type="journal article" date="2001" name="Proc. Natl. Acad. Sci. U.S.A.">
        <title>DNA damage-inducible gene p33ING2 negatively regulates cell proliferation through acetylation of p53.</title>
        <authorList>
            <person name="Nagashima M."/>
            <person name="Shiseki M."/>
            <person name="Miura K."/>
            <person name="Hagiwara K."/>
            <person name="Linke S.P."/>
            <person name="Pedeux R."/>
            <person name="Wang X.W."/>
            <person name="Yokota J."/>
            <person name="Riabowol K."/>
            <person name="Harris C.C."/>
        </authorList>
    </citation>
    <scope>NUCLEOTIDE SEQUENCE [GENOMIC DNA / MRNA] (ISOFORM 2)</scope>
</reference>
<reference key="9">
    <citation type="journal article" date="2004" name="Nat. Genet.">
        <title>Complete sequencing and characterization of 21,243 full-length human cDNAs.</title>
        <authorList>
            <person name="Ota T."/>
            <person name="Suzuki Y."/>
            <person name="Nishikawa T."/>
            <person name="Otsuki T."/>
            <person name="Sugiyama T."/>
            <person name="Irie R."/>
            <person name="Wakamatsu A."/>
            <person name="Hayashi K."/>
            <person name="Sato H."/>
            <person name="Nagai K."/>
            <person name="Kimura K."/>
            <person name="Makita H."/>
            <person name="Sekine M."/>
            <person name="Obayashi M."/>
            <person name="Nishi T."/>
            <person name="Shibahara T."/>
            <person name="Tanaka T."/>
            <person name="Ishii S."/>
            <person name="Yamamoto J."/>
            <person name="Saito K."/>
            <person name="Kawai Y."/>
            <person name="Isono Y."/>
            <person name="Nakamura Y."/>
            <person name="Nagahari K."/>
            <person name="Murakami K."/>
            <person name="Yasuda T."/>
            <person name="Iwayanagi T."/>
            <person name="Wagatsuma M."/>
            <person name="Shiratori A."/>
            <person name="Sudo H."/>
            <person name="Hosoiri T."/>
            <person name="Kaku Y."/>
            <person name="Kodaira H."/>
            <person name="Kondo H."/>
            <person name="Sugawara M."/>
            <person name="Takahashi M."/>
            <person name="Kanda K."/>
            <person name="Yokoi T."/>
            <person name="Furuya T."/>
            <person name="Kikkawa E."/>
            <person name="Omura Y."/>
            <person name="Abe K."/>
            <person name="Kamihara K."/>
            <person name="Katsuta N."/>
            <person name="Sato K."/>
            <person name="Tanikawa M."/>
            <person name="Yamazaki M."/>
            <person name="Ninomiya K."/>
            <person name="Ishibashi T."/>
            <person name="Yamashita H."/>
            <person name="Murakawa K."/>
            <person name="Fujimori K."/>
            <person name="Tanai H."/>
            <person name="Kimata M."/>
            <person name="Watanabe M."/>
            <person name="Hiraoka S."/>
            <person name="Chiba Y."/>
            <person name="Ishida S."/>
            <person name="Ono Y."/>
            <person name="Takiguchi S."/>
            <person name="Watanabe S."/>
            <person name="Yosida M."/>
            <person name="Hotuta T."/>
            <person name="Kusano J."/>
            <person name="Kanehori K."/>
            <person name="Takahashi-Fujii A."/>
            <person name="Hara H."/>
            <person name="Tanase T.-O."/>
            <person name="Nomura Y."/>
            <person name="Togiya S."/>
            <person name="Komai F."/>
            <person name="Hara R."/>
            <person name="Takeuchi K."/>
            <person name="Arita M."/>
            <person name="Imose N."/>
            <person name="Musashino K."/>
            <person name="Yuuki H."/>
            <person name="Oshima A."/>
            <person name="Sasaki N."/>
            <person name="Aotsuka S."/>
            <person name="Yoshikawa Y."/>
            <person name="Matsunawa H."/>
            <person name="Ichihara T."/>
            <person name="Shiohata N."/>
            <person name="Sano S."/>
            <person name="Moriya S."/>
            <person name="Momiyama H."/>
            <person name="Satoh N."/>
            <person name="Takami S."/>
            <person name="Terashima Y."/>
            <person name="Suzuki O."/>
            <person name="Nakagawa S."/>
            <person name="Senoh A."/>
            <person name="Mizoguchi H."/>
            <person name="Goto Y."/>
            <person name="Shimizu F."/>
            <person name="Wakebe H."/>
            <person name="Hishigaki H."/>
            <person name="Watanabe T."/>
            <person name="Sugiyama A."/>
            <person name="Takemoto M."/>
            <person name="Kawakami B."/>
            <person name="Yamazaki M."/>
            <person name="Watanabe K."/>
            <person name="Kumagai A."/>
            <person name="Itakura S."/>
            <person name="Fukuzumi Y."/>
            <person name="Fujimori Y."/>
            <person name="Komiyama M."/>
            <person name="Tashiro H."/>
            <person name="Tanigami A."/>
            <person name="Fujiwara T."/>
            <person name="Ono T."/>
            <person name="Yamada K."/>
            <person name="Fujii Y."/>
            <person name="Ozaki K."/>
            <person name="Hirao M."/>
            <person name="Ohmori Y."/>
            <person name="Kawabata A."/>
            <person name="Hikiji T."/>
            <person name="Kobatake N."/>
            <person name="Inagaki H."/>
            <person name="Ikema Y."/>
            <person name="Okamoto S."/>
            <person name="Okitani R."/>
            <person name="Kawakami T."/>
            <person name="Noguchi S."/>
            <person name="Itoh T."/>
            <person name="Shigeta K."/>
            <person name="Senba T."/>
            <person name="Matsumura K."/>
            <person name="Nakajima Y."/>
            <person name="Mizuno T."/>
            <person name="Morinaga M."/>
            <person name="Sasaki M."/>
            <person name="Togashi T."/>
            <person name="Oyama M."/>
            <person name="Hata H."/>
            <person name="Watanabe M."/>
            <person name="Komatsu T."/>
            <person name="Mizushima-Sugano J."/>
            <person name="Satoh T."/>
            <person name="Shirai Y."/>
            <person name="Takahashi Y."/>
            <person name="Nakagawa K."/>
            <person name="Okumura K."/>
            <person name="Nagase T."/>
            <person name="Nomura N."/>
            <person name="Kikuchi H."/>
            <person name="Masuho Y."/>
            <person name="Yamashita R."/>
            <person name="Nakai K."/>
            <person name="Yada T."/>
            <person name="Nakamura Y."/>
            <person name="Ohara O."/>
            <person name="Isogai T."/>
            <person name="Sugano S."/>
        </authorList>
    </citation>
    <scope>NUCLEOTIDE SEQUENCE [LARGE SCALE MRNA] (ISOFORM 4)</scope>
    <source>
        <tissue>Testis</tissue>
    </source>
</reference>
<reference key="10">
    <citation type="journal article" date="2004" name="Nature">
        <title>The DNA sequence and analysis of human chromosome 13.</title>
        <authorList>
            <person name="Dunham A."/>
            <person name="Matthews L.H."/>
            <person name="Burton J."/>
            <person name="Ashurst J.L."/>
            <person name="Howe K.L."/>
            <person name="Ashcroft K.J."/>
            <person name="Beare D.M."/>
            <person name="Burford D.C."/>
            <person name="Hunt S.E."/>
            <person name="Griffiths-Jones S."/>
            <person name="Jones M.C."/>
            <person name="Keenan S.J."/>
            <person name="Oliver K."/>
            <person name="Scott C.E."/>
            <person name="Ainscough R."/>
            <person name="Almeida J.P."/>
            <person name="Ambrose K.D."/>
            <person name="Andrews D.T."/>
            <person name="Ashwell R.I.S."/>
            <person name="Babbage A.K."/>
            <person name="Bagguley C.L."/>
            <person name="Bailey J."/>
            <person name="Bannerjee R."/>
            <person name="Barlow K.F."/>
            <person name="Bates K."/>
            <person name="Beasley H."/>
            <person name="Bird C.P."/>
            <person name="Bray-Allen S."/>
            <person name="Brown A.J."/>
            <person name="Brown J.Y."/>
            <person name="Burrill W."/>
            <person name="Carder C."/>
            <person name="Carter N.P."/>
            <person name="Chapman J.C."/>
            <person name="Clamp M.E."/>
            <person name="Clark S.Y."/>
            <person name="Clarke G."/>
            <person name="Clee C.M."/>
            <person name="Clegg S.C."/>
            <person name="Cobley V."/>
            <person name="Collins J.E."/>
            <person name="Corby N."/>
            <person name="Coville G.J."/>
            <person name="Deloukas P."/>
            <person name="Dhami P."/>
            <person name="Dunham I."/>
            <person name="Dunn M."/>
            <person name="Earthrowl M.E."/>
            <person name="Ellington A.G."/>
            <person name="Faulkner L."/>
            <person name="Frankish A.G."/>
            <person name="Frankland J."/>
            <person name="French L."/>
            <person name="Garner P."/>
            <person name="Garnett J."/>
            <person name="Gilbert J.G.R."/>
            <person name="Gilson C.J."/>
            <person name="Ghori J."/>
            <person name="Grafham D.V."/>
            <person name="Gribble S.M."/>
            <person name="Griffiths C."/>
            <person name="Hall R.E."/>
            <person name="Hammond S."/>
            <person name="Harley J.L."/>
            <person name="Hart E.A."/>
            <person name="Heath P.D."/>
            <person name="Howden P.J."/>
            <person name="Huckle E.J."/>
            <person name="Hunt P.J."/>
            <person name="Hunt A.R."/>
            <person name="Johnson C."/>
            <person name="Johnson D."/>
            <person name="Kay M."/>
            <person name="Kimberley A.M."/>
            <person name="King A."/>
            <person name="Laird G.K."/>
            <person name="Langford C.J."/>
            <person name="Lawlor S."/>
            <person name="Leongamornlert D.A."/>
            <person name="Lloyd D.M."/>
            <person name="Lloyd C."/>
            <person name="Loveland J.E."/>
            <person name="Lovell J."/>
            <person name="Martin S."/>
            <person name="Mashreghi-Mohammadi M."/>
            <person name="McLaren S.J."/>
            <person name="McMurray A."/>
            <person name="Milne S."/>
            <person name="Moore M.J.F."/>
            <person name="Nickerson T."/>
            <person name="Palmer S.A."/>
            <person name="Pearce A.V."/>
            <person name="Peck A.I."/>
            <person name="Pelan S."/>
            <person name="Phillimore B."/>
            <person name="Porter K.M."/>
            <person name="Rice C.M."/>
            <person name="Searle S."/>
            <person name="Sehra H.K."/>
            <person name="Shownkeen R."/>
            <person name="Skuce C.D."/>
            <person name="Smith M."/>
            <person name="Steward C.A."/>
            <person name="Sycamore N."/>
            <person name="Tester J."/>
            <person name="Thomas D.W."/>
            <person name="Tracey A."/>
            <person name="Tromans A."/>
            <person name="Tubby B."/>
            <person name="Wall M."/>
            <person name="Wallis J.M."/>
            <person name="West A.P."/>
            <person name="Whitehead S.L."/>
            <person name="Willey D.L."/>
            <person name="Wilming L."/>
            <person name="Wray P.W."/>
            <person name="Wright M.W."/>
            <person name="Young L."/>
            <person name="Coulson A."/>
            <person name="Durbin R.M."/>
            <person name="Hubbard T."/>
            <person name="Sulston J.E."/>
            <person name="Beck S."/>
            <person name="Bentley D.R."/>
            <person name="Rogers J."/>
            <person name="Ross M.T."/>
        </authorList>
    </citation>
    <scope>NUCLEOTIDE SEQUENCE [LARGE SCALE GENOMIC DNA]</scope>
</reference>
<reference key="11">
    <citation type="submission" date="2005-07" db="EMBL/GenBank/DDBJ databases">
        <authorList>
            <person name="Mural R.J."/>
            <person name="Istrail S."/>
            <person name="Sutton G.G."/>
            <person name="Florea L."/>
            <person name="Halpern A.L."/>
            <person name="Mobarry C.M."/>
            <person name="Lippert R."/>
            <person name="Walenz B."/>
            <person name="Shatkay H."/>
            <person name="Dew I."/>
            <person name="Miller J.R."/>
            <person name="Flanigan M.J."/>
            <person name="Edwards N.J."/>
            <person name="Bolanos R."/>
            <person name="Fasulo D."/>
            <person name="Halldorsson B.V."/>
            <person name="Hannenhalli S."/>
            <person name="Turner R."/>
            <person name="Yooseph S."/>
            <person name="Lu F."/>
            <person name="Nusskern D.R."/>
            <person name="Shue B.C."/>
            <person name="Zheng X.H."/>
            <person name="Zhong F."/>
            <person name="Delcher A.L."/>
            <person name="Huson D.H."/>
            <person name="Kravitz S.A."/>
            <person name="Mouchard L."/>
            <person name="Reinert K."/>
            <person name="Remington K.A."/>
            <person name="Clark A.G."/>
            <person name="Waterman M.S."/>
            <person name="Eichler E.E."/>
            <person name="Adams M.D."/>
            <person name="Hunkapiller M.W."/>
            <person name="Myers E.W."/>
            <person name="Venter J.C."/>
        </authorList>
    </citation>
    <scope>NUCLEOTIDE SEQUENCE [LARGE SCALE GENOMIC DNA]</scope>
</reference>
<reference key="12">
    <citation type="journal article" date="2004" name="Genome Res.">
        <title>The status, quality, and expansion of the NIH full-length cDNA project: the Mammalian Gene Collection (MGC).</title>
        <authorList>
            <consortium name="The MGC Project Team"/>
        </authorList>
    </citation>
    <scope>NUCLEOTIDE SEQUENCE [LARGE SCALE MRNA] (ISOFORM 2)</scope>
    <source>
        <tissue>Brain</tissue>
    </source>
</reference>
<reference key="13">
    <citation type="journal article" date="1998" name="Nature">
        <title>The candidate tumour suppressor p33ING1 cooperates with p53 in cell growth control.</title>
        <authorList>
            <person name="Garkavtsev I.A."/>
            <person name="Grigorian I.A."/>
            <person name="Ossovskaya V.S."/>
            <person name="Chernov M.V."/>
            <person name="Chumakov P.M."/>
            <person name="Gudkov A.V."/>
        </authorList>
    </citation>
    <scope>FUNCTION</scope>
    <scope>INTERACTION WITH TP53</scope>
</reference>
<reference key="14">
    <citation type="journal article" date="2006" name="Nature">
        <title>ING2 PHD domain links histone H3 lysine 4 methylation to active gene repression.</title>
        <authorList>
            <person name="Shi X."/>
            <person name="Hong T."/>
            <person name="Walter K.L."/>
            <person name="Ewalt M."/>
            <person name="Michishita E."/>
            <person name="Hung T."/>
            <person name="Carney D."/>
            <person name="Pena P."/>
            <person name="Lan F."/>
            <person name="Kaadige M.R."/>
            <person name="Lacoste N."/>
            <person name="Cayrou C."/>
            <person name="Davrazou F."/>
            <person name="Saha A."/>
            <person name="Cairns B.R."/>
            <person name="Ayer D.E."/>
            <person name="Kutateladze T.G."/>
            <person name="Shi Y."/>
            <person name="Cote J."/>
            <person name="Chua K.F."/>
            <person name="Gozani O."/>
        </authorList>
    </citation>
    <scope>DOMAIN PHD-TYPE ZINC-FINGER</scope>
    <scope>INTERACTION WITH HISTONES H3K4ME3 AND H3K4ME2</scope>
</reference>
<reference key="15">
    <citation type="journal article" date="2012" name="Cell Death Dis.">
        <title>Nucleolar protein CSIG is required for p33ING1 function in UV-induced apoptosis.</title>
        <authorList>
            <person name="Li N."/>
            <person name="Zhao G."/>
            <person name="Chen T."/>
            <person name="Xue L."/>
            <person name="Ma L."/>
            <person name="Niu J."/>
            <person name="Tong T."/>
        </authorList>
    </citation>
    <scope>INTERACTION WITH RSL1D1</scope>
</reference>
<reference key="16">
    <citation type="journal article" date="2017" name="Nat. Struct. Mol. Biol.">
        <title>Site-specific mapping of the human SUMO proteome reveals co-modification with phosphorylation.</title>
        <authorList>
            <person name="Hendriks I.A."/>
            <person name="Lyon D."/>
            <person name="Young C."/>
            <person name="Jensen L.J."/>
            <person name="Vertegaal A.C."/>
            <person name="Nielsen M.L."/>
        </authorList>
    </citation>
    <scope>SUMOYLATION [LARGE SCALE ANALYSIS] AT LYS-278</scope>
    <scope>IDENTIFICATION BY MASS SPECTROMETRY [LARGE SCALE ANALYSIS]</scope>
</reference>
<reference key="17">
    <citation type="journal article" date="2008" name="J. Mol. Biol.">
        <title>Histone H3K4me3 binding is required for the DNA repair and apoptotic activities of ING1 tumor suppressor.</title>
        <authorList>
            <person name="Pena P.V."/>
            <person name="Hom R.A."/>
            <person name="Hung T."/>
            <person name="Lin H."/>
            <person name="Kuo A.J."/>
            <person name="Wong R.P."/>
            <person name="Subach O.M."/>
            <person name="Champagne K.S."/>
            <person name="Zhao R."/>
            <person name="Verkhusha V.V."/>
            <person name="Li G."/>
            <person name="Gozani O."/>
            <person name="Kutateladze T.G."/>
        </authorList>
    </citation>
    <scope>X-RAY CRYSTALLOGRAPHY (2.1 ANGSTROMS) OF 345-404 IN COMPLEX WITH H3K4ME3 AND ZINC</scope>
    <scope>MUTAGENESIS OF TRP-378</scope>
</reference>
<gene>
    <name type="primary">ING1</name>
</gene>
<keyword id="KW-0002">3D-structure</keyword>
<keyword id="KW-0025">Alternative splicing</keyword>
<keyword id="KW-0131">Cell cycle</keyword>
<keyword id="KW-0225">Disease variant</keyword>
<keyword id="KW-1017">Isopeptide bond</keyword>
<keyword id="KW-0479">Metal-binding</keyword>
<keyword id="KW-0539">Nucleus</keyword>
<keyword id="KW-1267">Proteomics identification</keyword>
<keyword id="KW-1185">Reference proteome</keyword>
<keyword id="KW-0043">Tumor suppressor</keyword>
<keyword id="KW-0832">Ubl conjugation</keyword>
<keyword id="KW-0862">Zinc</keyword>
<keyword id="KW-0863">Zinc-finger</keyword>
<feature type="chain" id="PRO_0000212661" description="Inhibitor of growth protein 1">
    <location>
        <begin position="1"/>
        <end position="422"/>
    </location>
</feature>
<feature type="zinc finger region" description="PHD-type" evidence="2">
    <location>
        <begin position="353"/>
        <end position="402"/>
    </location>
</feature>
<feature type="region of interest" description="Disordered" evidence="3">
    <location>
        <begin position="261"/>
        <end position="349"/>
    </location>
</feature>
<feature type="region of interest" description="PBR" evidence="1">
    <location>
        <begin position="405"/>
        <end position="422"/>
    </location>
</feature>
<feature type="compositionally biased region" description="Basic and acidic residues" evidence="3">
    <location>
        <begin position="297"/>
        <end position="314"/>
    </location>
</feature>
<feature type="compositionally biased region" description="Basic residues" evidence="3">
    <location>
        <begin position="322"/>
        <end position="334"/>
    </location>
</feature>
<feature type="binding site" evidence="8 19">
    <location>
        <position position="356"/>
    </location>
    <ligand>
        <name>Zn(2+)</name>
        <dbReference type="ChEBI" id="CHEBI:29105"/>
        <label>1</label>
    </ligand>
</feature>
<feature type="binding site" evidence="8 19">
    <location>
        <position position="358"/>
    </location>
    <ligand>
        <name>Zn(2+)</name>
        <dbReference type="ChEBI" id="CHEBI:29105"/>
        <label>1</label>
    </ligand>
</feature>
<feature type="binding site" evidence="8 19">
    <location>
        <position position="369"/>
    </location>
    <ligand>
        <name>Zn(2+)</name>
        <dbReference type="ChEBI" id="CHEBI:29105"/>
        <label>2</label>
    </ligand>
</feature>
<feature type="binding site" evidence="8 19">
    <location>
        <position position="374"/>
    </location>
    <ligand>
        <name>Zn(2+)</name>
        <dbReference type="ChEBI" id="CHEBI:29105"/>
        <label>2</label>
    </ligand>
</feature>
<feature type="binding site" evidence="8 19">
    <location>
        <position position="380"/>
    </location>
    <ligand>
        <name>Zn(2+)</name>
        <dbReference type="ChEBI" id="CHEBI:29105"/>
        <label>1</label>
    </ligand>
</feature>
<feature type="binding site" evidence="8 19">
    <location>
        <position position="383"/>
    </location>
    <ligand>
        <name>Zn(2+)</name>
        <dbReference type="ChEBI" id="CHEBI:29105"/>
        <label>1</label>
    </ligand>
</feature>
<feature type="binding site" evidence="8 19">
    <location>
        <position position="396"/>
    </location>
    <ligand>
        <name>Zn(2+)</name>
        <dbReference type="ChEBI" id="CHEBI:29105"/>
        <label>2</label>
    </ligand>
</feature>
<feature type="binding site" evidence="8 19">
    <location>
        <position position="399"/>
    </location>
    <ligand>
        <name>Zn(2+)</name>
        <dbReference type="ChEBI" id="CHEBI:29105"/>
        <label>2</label>
    </ligand>
</feature>
<feature type="site" description="Histone H3K4me3 binding" evidence="8 19">
    <location>
        <position position="355"/>
    </location>
</feature>
<feature type="site" description="Histone H3K4me3 binding" evidence="8 19">
    <location>
        <position position="366"/>
    </location>
</feature>
<feature type="site" description="Histone H3K4me3 binding" evidence="8 19">
    <location>
        <position position="370"/>
    </location>
</feature>
<feature type="site" description="Histone H3K4me3 binding" evidence="8 19">
    <location>
        <position position="378"/>
    </location>
</feature>
<feature type="cross-link" description="Glycyl lysine isopeptide (Lys-Gly) (interchain with G-Cter in SUMO2)" evidence="20">
    <location>
        <position position="278"/>
    </location>
</feature>
<feature type="splice variant" id="VSP_009129" description="In isoform 3." evidence="12 13">
    <location>
        <begin position="1"/>
        <end position="212"/>
    </location>
</feature>
<feature type="splice variant" id="VSP_009126" description="In isoform 2." evidence="12 13 14 16 17">
    <original>MSFVECPYHSPAERLVAEADEGGPSAITGMGLCFRCLLFSFSGRSGVEGGRVDLNVFGSLGLQPWIGSSRCWGGPCSSALRCGWFSSWPPPSKSAIPIGGGSRGAGRVSRWPPPHWLEAWRVSPLPLSPLSPATFGRGFIAVAVIPGLWARGRGCSSDRLPRPAGPARRQFQAASLLTRGWGRAWPWKQ</original>
    <variation>MLSPANGEQLHLVNYVEDYLDSIESLPFDLQRNVSLMREIDAKYQE</variation>
    <location>
        <begin position="1"/>
        <end position="189"/>
    </location>
</feature>
<feature type="splice variant" id="VSP_009127" description="In isoform 4." evidence="12 15">
    <original>MSFVECPYHSPAERLVAEADEGGPSAITGMGLCFRCLLFSFSGRSGVEGGRVDLNVFGSLGLQPWIGSSRCWGGPCSSALRCGWFSSWPPPSKSAIPIGGGSRGAGRVSRWPPPHWLEAWRVSPLPLSPLSPATFGRGFIAVAVIPGLWARGRGCSSDRLPRPAGPARRQFQAASLLTRGWGRAWPWKQ</original>
    <variation>ME</variation>
    <location>
        <begin position="1"/>
        <end position="189"/>
    </location>
</feature>
<feature type="splice variant" id="VSP_009128" description="In isoform 5." evidence="18">
    <original>MSFVECPYHSPAERLVAEADEGGPSAITGMGLCFRCLLFSFSGRSGVEGGRVDLNVFGSLGLQPWIGSSRCWGGPCSSALRCGWFSSWPPPSKSAIPIGGGSRGAGRVSRWPPPHWLEAWRVSPLPLSPLSPATFGRGFIAVAVIPGLWARGRGCSSDRLPRPAGPARRQFQAASLLTRGWGRAWPWKQ</original>
    <variation>MSFVECPYHSPAERLVAEADEGGPSAITE</variation>
    <location>
        <begin position="1"/>
        <end position="189"/>
    </location>
</feature>
<feature type="sequence variant" id="VAR_047097" description="In dbSNP:rs7338333." evidence="5 6 10">
    <original>L</original>
    <variation>R</variation>
    <location>
        <position position="125"/>
    </location>
</feature>
<feature type="sequence variant" id="VAR_017420" description="In HNSCC." evidence="6">
    <original>A</original>
    <variation>D</variation>
    <location>
        <position position="335"/>
    </location>
</feature>
<feature type="sequence variant" id="VAR_017421" description="In HNSCC." evidence="6">
    <original>C</original>
    <variation>S</variation>
    <location>
        <position position="358"/>
    </location>
</feature>
<feature type="sequence variant" id="VAR_017422" description="In HNSCC." evidence="6">
    <original>N</original>
    <variation>S</variation>
    <location>
        <position position="359"/>
    </location>
</feature>
<feature type="mutagenesis site" description="Unable to stimulate DNA repair after UV irradiation or promote DNA-damage-induced apoptosis." evidence="8">
    <original>W</original>
    <variation>A</variation>
    <location>
        <position position="378"/>
    </location>
</feature>
<feature type="sequence conflict" description="In Ref. 1; AAC00501/AAB60879, 3 and 6." evidence="18" ref="1 3 6">
    <original>A</original>
    <variation>V</variation>
    <location>
        <position position="266"/>
    </location>
</feature>
<feature type="sequence conflict" description="In Ref. 1; AAC00501/AAB60879, 3 and 6." evidence="18" ref="1 3 6">
    <original>A</original>
    <variation>V</variation>
    <location>
        <position position="272"/>
    </location>
</feature>
<feature type="sequence conflict" description="In Ref. 1; AAC00501/AAB60879, 3 and 6." evidence="18" ref="1 3 6">
    <original>K</original>
    <variation>N</variation>
    <location>
        <position position="278"/>
    </location>
</feature>
<feature type="sequence conflict" description="In Ref. 1; AAC00501/AAB60879, 3 and 6." evidence="18" ref="1 3 6">
    <original>E</original>
    <variation>D</variation>
    <location>
        <position position="280"/>
    </location>
</feature>
<feature type="sequence conflict" description="In Ref. 1; AAC00501/AAB60879, 3 and 6." evidence="18" ref="1 3 6">
    <original>A</original>
    <variation>V</variation>
    <location>
        <position position="282"/>
    </location>
</feature>
<feature type="sequence conflict" description="In Ref. 1; AAC00501/AAB60879, 3 and 6." evidence="18" ref="1 3 6">
    <original>A</original>
    <variation>S</variation>
    <location>
        <position position="285"/>
    </location>
</feature>
<feature type="turn" evidence="21">
    <location>
        <begin position="356"/>
        <end position="359"/>
    </location>
</feature>
<feature type="strand" evidence="21">
    <location>
        <begin position="364"/>
        <end position="368"/>
    </location>
</feature>
<feature type="strand" evidence="21">
    <location>
        <begin position="378"/>
        <end position="380"/>
    </location>
</feature>
<feature type="helix" evidence="21">
    <location>
        <begin position="382"/>
        <end position="384"/>
    </location>
</feature>
<feature type="helix" evidence="21">
    <location>
        <begin position="397"/>
        <end position="400"/>
    </location>
</feature>
<protein>
    <recommendedName>
        <fullName>Inhibitor of growth protein 1</fullName>
    </recommendedName>
</protein>
<name>ING1_HUMAN</name>
<accession>Q9UK53</accession>
<accession>O00532</accession>
<accession>O43658</accession>
<accession>Q53ZR3</accession>
<accession>Q5T9G8</accession>
<accession>Q5T9G9</accession>
<accession>Q5T9H0</accession>
<accession>Q5T9H1</accession>
<accession>Q9H007</accession>
<accession>Q9HD98</accession>
<accession>Q9HD99</accession>
<accession>Q9NS83</accession>
<accession>Q9P0U6</accession>
<accession>Q9UBC6</accession>
<accession>Q9UIJ1</accession>
<accession>Q9UIJ2</accession>
<accession>Q9UIJ3</accession>
<accession>Q9UIJ4</accession>
<accession>Q9UK52</accession>
<sequence length="422" mass="46738">MSFVECPYHSPAERLVAEADEGGPSAITGMGLCFRCLLFSFSGRSGVEGGRVDLNVFGSLGLQPWIGSSRCWGGPCSSALRCGWFSSWPPPSKSAIPIGGGSRGAGRVSRWPPPHWLEAWRVSPLPLSPLSPATFGRGFIAVAVIPGLWARGRGCSSDRLPRPAGPARRQFQAASLLTRGWGRAWPWKQILKELDECYERFSRETDGAQKRRMLHCVQRALIRSQELGDEKIQIVSQMVELVENRTRQVDSHVELFEAQQELGDTAGNSGKAGADRPKGEAAAQADKPNSKRSRRQRNNENRENASSNHDHDDGASGTPKEKKAKTSKKKKRSKAKAEREASPADLPIDPNEPTYCLCNQVSYGEMIGCDNDECPIEWFHFSCVGLNHKPKGKWYCPKCRGENEKTMDKALEKSKKERAYNR</sequence>